<name>RS15_SULNB</name>
<evidence type="ECO:0000255" key="1">
    <source>
        <dbReference type="HAMAP-Rule" id="MF_01343"/>
    </source>
</evidence>
<evidence type="ECO:0000305" key="2"/>
<proteinExistence type="inferred from homology"/>
<reference key="1">
    <citation type="journal article" date="2007" name="Proc. Natl. Acad. Sci. U.S.A.">
        <title>Deep-sea vent epsilon-proteobacterial genomes provide insights into emergence of pathogens.</title>
        <authorList>
            <person name="Nakagawa S."/>
            <person name="Takaki Y."/>
            <person name="Shimamura S."/>
            <person name="Reysenbach A.-L."/>
            <person name="Takai K."/>
            <person name="Horikoshi K."/>
        </authorList>
    </citation>
    <scope>NUCLEOTIDE SEQUENCE [LARGE SCALE GENOMIC DNA]</scope>
    <source>
        <strain>NBC37-1</strain>
    </source>
</reference>
<organism>
    <name type="scientific">Sulfurovum sp. (strain NBC37-1)</name>
    <dbReference type="NCBI Taxonomy" id="387093"/>
    <lineage>
        <taxon>Bacteria</taxon>
        <taxon>Pseudomonadati</taxon>
        <taxon>Campylobacterota</taxon>
        <taxon>Epsilonproteobacteria</taxon>
        <taxon>Campylobacterales</taxon>
        <taxon>Sulfurovaceae</taxon>
        <taxon>Sulfurovum</taxon>
    </lineage>
</organism>
<feature type="chain" id="PRO_1000054884" description="Small ribosomal subunit protein uS15">
    <location>
        <begin position="1"/>
        <end position="89"/>
    </location>
</feature>
<protein>
    <recommendedName>
        <fullName evidence="1">Small ribosomal subunit protein uS15</fullName>
    </recommendedName>
    <alternativeName>
        <fullName evidence="2">30S ribosomal protein S15</fullName>
    </alternativeName>
</protein>
<keyword id="KW-0687">Ribonucleoprotein</keyword>
<keyword id="KW-0689">Ribosomal protein</keyword>
<keyword id="KW-0694">RNA-binding</keyword>
<keyword id="KW-0699">rRNA-binding</keyword>
<gene>
    <name evidence="1" type="primary">rpsO</name>
    <name type="ordered locus">SUN_1874</name>
</gene>
<accession>A6QBG2</accession>
<sequence>MALDQAKKAEIIAKYARGENDTGSTEVQVALLTERIKYLTDHLKTNKKDHSSRLGLLKLVGQRRRLMRYLKNTDLERWHTIKDALGIRN</sequence>
<dbReference type="EMBL" id="AP009179">
    <property type="protein sequence ID" value="BAF72821.1"/>
    <property type="molecule type" value="Genomic_DNA"/>
</dbReference>
<dbReference type="RefSeq" id="WP_012083634.1">
    <property type="nucleotide sequence ID" value="NC_009663.1"/>
</dbReference>
<dbReference type="SMR" id="A6QBG2"/>
<dbReference type="STRING" id="387093.SUN_1874"/>
<dbReference type="KEGG" id="sun:SUN_1874"/>
<dbReference type="eggNOG" id="COG0184">
    <property type="taxonomic scope" value="Bacteria"/>
</dbReference>
<dbReference type="HOGENOM" id="CLU_148518_0_0_7"/>
<dbReference type="OrthoDB" id="9799262at2"/>
<dbReference type="Proteomes" id="UP000006378">
    <property type="component" value="Chromosome"/>
</dbReference>
<dbReference type="GO" id="GO:0022627">
    <property type="term" value="C:cytosolic small ribosomal subunit"/>
    <property type="evidence" value="ECO:0007669"/>
    <property type="project" value="TreeGrafter"/>
</dbReference>
<dbReference type="GO" id="GO:0019843">
    <property type="term" value="F:rRNA binding"/>
    <property type="evidence" value="ECO:0007669"/>
    <property type="project" value="UniProtKB-UniRule"/>
</dbReference>
<dbReference type="GO" id="GO:0003735">
    <property type="term" value="F:structural constituent of ribosome"/>
    <property type="evidence" value="ECO:0007669"/>
    <property type="project" value="InterPro"/>
</dbReference>
<dbReference type="GO" id="GO:0006412">
    <property type="term" value="P:translation"/>
    <property type="evidence" value="ECO:0007669"/>
    <property type="project" value="UniProtKB-UniRule"/>
</dbReference>
<dbReference type="CDD" id="cd00353">
    <property type="entry name" value="Ribosomal_S15p_S13e"/>
    <property type="match status" value="1"/>
</dbReference>
<dbReference type="FunFam" id="1.10.287.10:FF:000002">
    <property type="entry name" value="30S ribosomal protein S15"/>
    <property type="match status" value="1"/>
</dbReference>
<dbReference type="Gene3D" id="6.10.250.3130">
    <property type="match status" value="1"/>
</dbReference>
<dbReference type="Gene3D" id="1.10.287.10">
    <property type="entry name" value="S15/NS1, RNA-binding"/>
    <property type="match status" value="1"/>
</dbReference>
<dbReference type="HAMAP" id="MF_01343_B">
    <property type="entry name" value="Ribosomal_uS15_B"/>
    <property type="match status" value="1"/>
</dbReference>
<dbReference type="InterPro" id="IPR000589">
    <property type="entry name" value="Ribosomal_uS15"/>
</dbReference>
<dbReference type="InterPro" id="IPR005290">
    <property type="entry name" value="Ribosomal_uS15_bac-type"/>
</dbReference>
<dbReference type="InterPro" id="IPR009068">
    <property type="entry name" value="uS15_NS1_RNA-bd_sf"/>
</dbReference>
<dbReference type="NCBIfam" id="TIGR00952">
    <property type="entry name" value="S15_bact"/>
    <property type="match status" value="1"/>
</dbReference>
<dbReference type="PANTHER" id="PTHR23321">
    <property type="entry name" value="RIBOSOMAL PROTEIN S15, BACTERIAL AND ORGANELLAR"/>
    <property type="match status" value="1"/>
</dbReference>
<dbReference type="PANTHER" id="PTHR23321:SF26">
    <property type="entry name" value="SMALL RIBOSOMAL SUBUNIT PROTEIN US15M"/>
    <property type="match status" value="1"/>
</dbReference>
<dbReference type="Pfam" id="PF00312">
    <property type="entry name" value="Ribosomal_S15"/>
    <property type="match status" value="1"/>
</dbReference>
<dbReference type="SMART" id="SM01387">
    <property type="entry name" value="Ribosomal_S15"/>
    <property type="match status" value="1"/>
</dbReference>
<dbReference type="SUPFAM" id="SSF47060">
    <property type="entry name" value="S15/NS1 RNA-binding domain"/>
    <property type="match status" value="1"/>
</dbReference>
<dbReference type="PROSITE" id="PS00362">
    <property type="entry name" value="RIBOSOMAL_S15"/>
    <property type="match status" value="1"/>
</dbReference>
<comment type="function">
    <text evidence="1">One of the primary rRNA binding proteins, it binds directly to 16S rRNA where it helps nucleate assembly of the platform of the 30S subunit by binding and bridging several RNA helices of the 16S rRNA.</text>
</comment>
<comment type="function">
    <text evidence="1">Forms an intersubunit bridge (bridge B4) with the 23S rRNA of the 50S subunit in the ribosome.</text>
</comment>
<comment type="subunit">
    <text evidence="1">Part of the 30S ribosomal subunit. Forms a bridge to the 50S subunit in the 70S ribosome, contacting the 23S rRNA.</text>
</comment>
<comment type="similarity">
    <text evidence="1">Belongs to the universal ribosomal protein uS15 family.</text>
</comment>